<accession>Q4ZX09</accession>
<organism>
    <name type="scientific">Pseudomonas syringae pv. syringae (strain B728a)</name>
    <dbReference type="NCBI Taxonomy" id="205918"/>
    <lineage>
        <taxon>Bacteria</taxon>
        <taxon>Pseudomonadati</taxon>
        <taxon>Pseudomonadota</taxon>
        <taxon>Gammaproteobacteria</taxon>
        <taxon>Pseudomonadales</taxon>
        <taxon>Pseudomonadaceae</taxon>
        <taxon>Pseudomonas</taxon>
        <taxon>Pseudomonas syringae</taxon>
    </lineage>
</organism>
<reference key="1">
    <citation type="journal article" date="2005" name="Proc. Natl. Acad. Sci. U.S.A.">
        <title>Comparison of the complete genome sequences of Pseudomonas syringae pv. syringae B728a and pv. tomato DC3000.</title>
        <authorList>
            <person name="Feil H."/>
            <person name="Feil W.S."/>
            <person name="Chain P."/>
            <person name="Larimer F."/>
            <person name="Dibartolo G."/>
            <person name="Copeland A."/>
            <person name="Lykidis A."/>
            <person name="Trong S."/>
            <person name="Nolan M."/>
            <person name="Goltsman E."/>
            <person name="Thiel J."/>
            <person name="Malfatti S."/>
            <person name="Loper J.E."/>
            <person name="Lapidus A."/>
            <person name="Detter J.C."/>
            <person name="Land M."/>
            <person name="Richardson P.M."/>
            <person name="Kyrpides N.C."/>
            <person name="Ivanova N."/>
            <person name="Lindow S.E."/>
        </authorList>
    </citation>
    <scope>NUCLEOTIDE SEQUENCE [LARGE SCALE GENOMIC DNA]</scope>
    <source>
        <strain>B728a</strain>
    </source>
</reference>
<proteinExistence type="inferred from homology"/>
<protein>
    <recommendedName>
        <fullName evidence="1">GMP synthase [glutamine-hydrolyzing]</fullName>
        <ecNumber evidence="1">6.3.5.2</ecNumber>
    </recommendedName>
    <alternativeName>
        <fullName evidence="1">GMP synthetase</fullName>
    </alternativeName>
    <alternativeName>
        <fullName evidence="1">Glutamine amidotransferase</fullName>
    </alternativeName>
</protein>
<sequence length="525" mass="58072">MALDIHAHRILILDFGSQYTQLIARRVREIGVYCELHPFDMDDEAIREFAPKGVVLAGGPESVHEADSPRCPQAVFDLGVPVFGICYGMQTMAEQLGGKVAGSELREFGYARVDVVGKSRLLDGIEDHIDADGLFGLDVWMSHGDKVTKLPENFHILASTPSCPIAGMADDARGYYGVQFHPEVTHTKQGGRILSRFILDICGCEALWTPSKIAEDAIAQVRAQVGTDNVLLGLSGGVDSSVVAALLHKAIGDQLTCVFVDNGLLRLHEGEQVMAMFAENMGVKVIRANAEEQFLNNLAGESDPEKKRKIIGRTFIDVFDAESCKLDNIKYLAQGTIYPDVIESAGAKSGKAHVIKSHHNVGGLPEEMNLKLVEPLRELFKDEVRRLGLELGLPYDMVYRHPFPGPGLGVRILGEVKKEYADLLRRADHIFIEELRKADWYHKVSQAFVVFQPVKSVGVVGDGRRYAWVVALRAVETIDFMTARWAHLPYELLETVSGRIINEIEGISRVTYDVSSKPPATIEWE</sequence>
<name>GUAA_PSEU2</name>
<keyword id="KW-0067">ATP-binding</keyword>
<keyword id="KW-0315">Glutamine amidotransferase</keyword>
<keyword id="KW-0332">GMP biosynthesis</keyword>
<keyword id="KW-0436">Ligase</keyword>
<keyword id="KW-0547">Nucleotide-binding</keyword>
<keyword id="KW-0658">Purine biosynthesis</keyword>
<feature type="chain" id="PRO_0000229460" description="GMP synthase [glutamine-hydrolyzing]">
    <location>
        <begin position="1"/>
        <end position="525"/>
    </location>
</feature>
<feature type="domain" description="Glutamine amidotransferase type-1" evidence="1">
    <location>
        <begin position="9"/>
        <end position="207"/>
    </location>
</feature>
<feature type="domain" description="GMPS ATP-PPase" evidence="1">
    <location>
        <begin position="208"/>
        <end position="400"/>
    </location>
</feature>
<feature type="active site" description="Nucleophile" evidence="1">
    <location>
        <position position="86"/>
    </location>
</feature>
<feature type="active site" evidence="1">
    <location>
        <position position="181"/>
    </location>
</feature>
<feature type="active site" evidence="1">
    <location>
        <position position="183"/>
    </location>
</feature>
<feature type="binding site" evidence="1">
    <location>
        <begin position="235"/>
        <end position="241"/>
    </location>
    <ligand>
        <name>ATP</name>
        <dbReference type="ChEBI" id="CHEBI:30616"/>
    </ligand>
</feature>
<evidence type="ECO:0000255" key="1">
    <source>
        <dbReference type="HAMAP-Rule" id="MF_00344"/>
    </source>
</evidence>
<gene>
    <name evidence="1" type="primary">guaA</name>
    <name type="ordered locus">Psyr_1262</name>
</gene>
<dbReference type="EC" id="6.3.5.2" evidence="1"/>
<dbReference type="EMBL" id="CP000075">
    <property type="protein sequence ID" value="AAY36313.1"/>
    <property type="molecule type" value="Genomic_DNA"/>
</dbReference>
<dbReference type="RefSeq" id="WP_011266918.1">
    <property type="nucleotide sequence ID" value="NC_007005.1"/>
</dbReference>
<dbReference type="RefSeq" id="YP_234351.1">
    <property type="nucleotide sequence ID" value="NC_007005.1"/>
</dbReference>
<dbReference type="SMR" id="Q4ZX09"/>
<dbReference type="STRING" id="205918.Psyr_1262"/>
<dbReference type="MEROPS" id="C26.957"/>
<dbReference type="KEGG" id="psb:Psyr_1262"/>
<dbReference type="PATRIC" id="fig|205918.7.peg.1295"/>
<dbReference type="eggNOG" id="COG0518">
    <property type="taxonomic scope" value="Bacteria"/>
</dbReference>
<dbReference type="eggNOG" id="COG0519">
    <property type="taxonomic scope" value="Bacteria"/>
</dbReference>
<dbReference type="HOGENOM" id="CLU_014340_0_5_6"/>
<dbReference type="OrthoDB" id="9802219at2"/>
<dbReference type="UniPathway" id="UPA00189">
    <property type="reaction ID" value="UER00296"/>
</dbReference>
<dbReference type="Proteomes" id="UP000000426">
    <property type="component" value="Chromosome"/>
</dbReference>
<dbReference type="GO" id="GO:0005829">
    <property type="term" value="C:cytosol"/>
    <property type="evidence" value="ECO:0007669"/>
    <property type="project" value="TreeGrafter"/>
</dbReference>
<dbReference type="GO" id="GO:0005524">
    <property type="term" value="F:ATP binding"/>
    <property type="evidence" value="ECO:0007669"/>
    <property type="project" value="UniProtKB-UniRule"/>
</dbReference>
<dbReference type="GO" id="GO:0003921">
    <property type="term" value="F:GMP synthase activity"/>
    <property type="evidence" value="ECO:0007669"/>
    <property type="project" value="InterPro"/>
</dbReference>
<dbReference type="CDD" id="cd01742">
    <property type="entry name" value="GATase1_GMP_Synthase"/>
    <property type="match status" value="1"/>
</dbReference>
<dbReference type="CDD" id="cd01997">
    <property type="entry name" value="GMP_synthase_C"/>
    <property type="match status" value="1"/>
</dbReference>
<dbReference type="FunFam" id="3.30.300.10:FF:000002">
    <property type="entry name" value="GMP synthase [glutamine-hydrolyzing]"/>
    <property type="match status" value="1"/>
</dbReference>
<dbReference type="FunFam" id="3.40.50.620:FF:000001">
    <property type="entry name" value="GMP synthase [glutamine-hydrolyzing]"/>
    <property type="match status" value="1"/>
</dbReference>
<dbReference type="FunFam" id="3.40.50.880:FF:000001">
    <property type="entry name" value="GMP synthase [glutamine-hydrolyzing]"/>
    <property type="match status" value="1"/>
</dbReference>
<dbReference type="Gene3D" id="3.30.300.10">
    <property type="match status" value="1"/>
</dbReference>
<dbReference type="Gene3D" id="3.40.50.880">
    <property type="match status" value="1"/>
</dbReference>
<dbReference type="Gene3D" id="3.40.50.620">
    <property type="entry name" value="HUPs"/>
    <property type="match status" value="1"/>
</dbReference>
<dbReference type="HAMAP" id="MF_00344">
    <property type="entry name" value="GMP_synthase"/>
    <property type="match status" value="1"/>
</dbReference>
<dbReference type="InterPro" id="IPR029062">
    <property type="entry name" value="Class_I_gatase-like"/>
</dbReference>
<dbReference type="InterPro" id="IPR017926">
    <property type="entry name" value="GATASE"/>
</dbReference>
<dbReference type="InterPro" id="IPR001674">
    <property type="entry name" value="GMP_synth_C"/>
</dbReference>
<dbReference type="InterPro" id="IPR004739">
    <property type="entry name" value="GMP_synth_GATase"/>
</dbReference>
<dbReference type="InterPro" id="IPR022955">
    <property type="entry name" value="GMP_synthase"/>
</dbReference>
<dbReference type="InterPro" id="IPR025777">
    <property type="entry name" value="GMPS_ATP_PPase_dom"/>
</dbReference>
<dbReference type="InterPro" id="IPR022310">
    <property type="entry name" value="NAD/GMP_synthase"/>
</dbReference>
<dbReference type="InterPro" id="IPR014729">
    <property type="entry name" value="Rossmann-like_a/b/a_fold"/>
</dbReference>
<dbReference type="NCBIfam" id="TIGR00884">
    <property type="entry name" value="guaA_Cterm"/>
    <property type="match status" value="1"/>
</dbReference>
<dbReference type="NCBIfam" id="TIGR00888">
    <property type="entry name" value="guaA_Nterm"/>
    <property type="match status" value="1"/>
</dbReference>
<dbReference type="NCBIfam" id="NF000848">
    <property type="entry name" value="PRK00074.1"/>
    <property type="match status" value="1"/>
</dbReference>
<dbReference type="PANTHER" id="PTHR11922:SF2">
    <property type="entry name" value="GMP SYNTHASE [GLUTAMINE-HYDROLYZING]"/>
    <property type="match status" value="1"/>
</dbReference>
<dbReference type="PANTHER" id="PTHR11922">
    <property type="entry name" value="GMP SYNTHASE-RELATED"/>
    <property type="match status" value="1"/>
</dbReference>
<dbReference type="Pfam" id="PF00117">
    <property type="entry name" value="GATase"/>
    <property type="match status" value="1"/>
</dbReference>
<dbReference type="Pfam" id="PF00958">
    <property type="entry name" value="GMP_synt_C"/>
    <property type="match status" value="1"/>
</dbReference>
<dbReference type="Pfam" id="PF02540">
    <property type="entry name" value="NAD_synthase"/>
    <property type="match status" value="1"/>
</dbReference>
<dbReference type="PRINTS" id="PR00099">
    <property type="entry name" value="CPSGATASE"/>
</dbReference>
<dbReference type="PRINTS" id="PR00096">
    <property type="entry name" value="GATASE"/>
</dbReference>
<dbReference type="SUPFAM" id="SSF52402">
    <property type="entry name" value="Adenine nucleotide alpha hydrolases-like"/>
    <property type="match status" value="1"/>
</dbReference>
<dbReference type="SUPFAM" id="SSF52317">
    <property type="entry name" value="Class I glutamine amidotransferase-like"/>
    <property type="match status" value="1"/>
</dbReference>
<dbReference type="SUPFAM" id="SSF54810">
    <property type="entry name" value="GMP synthetase C-terminal dimerisation domain"/>
    <property type="match status" value="1"/>
</dbReference>
<dbReference type="PROSITE" id="PS51273">
    <property type="entry name" value="GATASE_TYPE_1"/>
    <property type="match status" value="1"/>
</dbReference>
<dbReference type="PROSITE" id="PS51553">
    <property type="entry name" value="GMPS_ATP_PPASE"/>
    <property type="match status" value="1"/>
</dbReference>
<comment type="function">
    <text evidence="1">Catalyzes the synthesis of GMP from XMP.</text>
</comment>
<comment type="catalytic activity">
    <reaction evidence="1">
        <text>XMP + L-glutamine + ATP + H2O = GMP + L-glutamate + AMP + diphosphate + 2 H(+)</text>
        <dbReference type="Rhea" id="RHEA:11680"/>
        <dbReference type="ChEBI" id="CHEBI:15377"/>
        <dbReference type="ChEBI" id="CHEBI:15378"/>
        <dbReference type="ChEBI" id="CHEBI:29985"/>
        <dbReference type="ChEBI" id="CHEBI:30616"/>
        <dbReference type="ChEBI" id="CHEBI:33019"/>
        <dbReference type="ChEBI" id="CHEBI:57464"/>
        <dbReference type="ChEBI" id="CHEBI:58115"/>
        <dbReference type="ChEBI" id="CHEBI:58359"/>
        <dbReference type="ChEBI" id="CHEBI:456215"/>
        <dbReference type="EC" id="6.3.5.2"/>
    </reaction>
</comment>
<comment type="pathway">
    <text evidence="1">Purine metabolism; GMP biosynthesis; GMP from XMP (L-Gln route): step 1/1.</text>
</comment>
<comment type="subunit">
    <text evidence="1">Homodimer.</text>
</comment>